<feature type="chain" id="PRO_0000345501" description="Small ribosomal subunit protein bS18B">
    <location>
        <begin position="1"/>
        <end position="79"/>
    </location>
</feature>
<dbReference type="EMBL" id="CP000656">
    <property type="protein sequence ID" value="ABP43791.1"/>
    <property type="status" value="ALT_INIT"/>
    <property type="molecule type" value="Genomic_DNA"/>
</dbReference>
<dbReference type="SMR" id="A4T5Z8"/>
<dbReference type="STRING" id="350054.Mflv_1309"/>
<dbReference type="KEGG" id="mgi:Mflv_1309"/>
<dbReference type="eggNOG" id="COG0238">
    <property type="taxonomic scope" value="Bacteria"/>
</dbReference>
<dbReference type="HOGENOM" id="CLU_148710_3_0_11"/>
<dbReference type="OrthoDB" id="9812008at2"/>
<dbReference type="GO" id="GO:0022627">
    <property type="term" value="C:cytosolic small ribosomal subunit"/>
    <property type="evidence" value="ECO:0007669"/>
    <property type="project" value="TreeGrafter"/>
</dbReference>
<dbReference type="GO" id="GO:0070181">
    <property type="term" value="F:small ribosomal subunit rRNA binding"/>
    <property type="evidence" value="ECO:0007669"/>
    <property type="project" value="TreeGrafter"/>
</dbReference>
<dbReference type="GO" id="GO:0003735">
    <property type="term" value="F:structural constituent of ribosome"/>
    <property type="evidence" value="ECO:0007669"/>
    <property type="project" value="InterPro"/>
</dbReference>
<dbReference type="GO" id="GO:0006412">
    <property type="term" value="P:translation"/>
    <property type="evidence" value="ECO:0007669"/>
    <property type="project" value="UniProtKB-UniRule"/>
</dbReference>
<dbReference type="Gene3D" id="4.10.640.10">
    <property type="entry name" value="Ribosomal protein S18"/>
    <property type="match status" value="1"/>
</dbReference>
<dbReference type="HAMAP" id="MF_00270">
    <property type="entry name" value="Ribosomal_bS18"/>
    <property type="match status" value="1"/>
</dbReference>
<dbReference type="InterPro" id="IPR001648">
    <property type="entry name" value="Ribosomal_bS18"/>
</dbReference>
<dbReference type="InterPro" id="IPR036870">
    <property type="entry name" value="Ribosomal_bS18_sf"/>
</dbReference>
<dbReference type="NCBIfam" id="TIGR00165">
    <property type="entry name" value="S18"/>
    <property type="match status" value="1"/>
</dbReference>
<dbReference type="PANTHER" id="PTHR13479">
    <property type="entry name" value="30S RIBOSOMAL PROTEIN S18"/>
    <property type="match status" value="1"/>
</dbReference>
<dbReference type="PANTHER" id="PTHR13479:SF40">
    <property type="entry name" value="SMALL RIBOSOMAL SUBUNIT PROTEIN BS18M"/>
    <property type="match status" value="1"/>
</dbReference>
<dbReference type="Pfam" id="PF01084">
    <property type="entry name" value="Ribosomal_S18"/>
    <property type="match status" value="1"/>
</dbReference>
<dbReference type="PRINTS" id="PR00974">
    <property type="entry name" value="RIBOSOMALS18"/>
</dbReference>
<dbReference type="SUPFAM" id="SSF46911">
    <property type="entry name" value="Ribosomal protein S18"/>
    <property type="match status" value="1"/>
</dbReference>
<protein>
    <recommendedName>
        <fullName evidence="1">Small ribosomal subunit protein bS18B</fullName>
    </recommendedName>
    <alternativeName>
        <fullName evidence="2">30S ribosomal protein S18 2</fullName>
    </alternativeName>
</protein>
<accession>A4T5Z8</accession>
<proteinExistence type="inferred from homology"/>
<sequence>MKRARRAAPLPKKRRNMFAQLGIERVDYKDTSTLRQFLSERGKIRSRTVTGLTVQQQRQVTIAVKNAREMALLPYPGQG</sequence>
<evidence type="ECO:0000255" key="1">
    <source>
        <dbReference type="HAMAP-Rule" id="MF_00270"/>
    </source>
</evidence>
<evidence type="ECO:0000305" key="2"/>
<comment type="function">
    <text evidence="1">Binds as a heterodimer with protein bS6 to the central domain of the 16S rRNA, where it helps stabilize the platform of the 30S subunit.</text>
</comment>
<comment type="subunit">
    <text evidence="1">Part of the 30S ribosomal subunit. Forms a tight heterodimer with protein bS6.</text>
</comment>
<comment type="similarity">
    <text evidence="1">Belongs to the bacterial ribosomal protein bS18 family.</text>
</comment>
<comment type="sequence caution" evidence="2">
    <conflict type="erroneous initiation">
        <sequence resource="EMBL-CDS" id="ABP43791"/>
    </conflict>
    <text>Truncated N-terminus.</text>
</comment>
<organism>
    <name type="scientific">Mycolicibacterium gilvum (strain PYR-GCK)</name>
    <name type="common">Mycobacterium gilvum (strain PYR-GCK)</name>
    <dbReference type="NCBI Taxonomy" id="350054"/>
    <lineage>
        <taxon>Bacteria</taxon>
        <taxon>Bacillati</taxon>
        <taxon>Actinomycetota</taxon>
        <taxon>Actinomycetes</taxon>
        <taxon>Mycobacteriales</taxon>
        <taxon>Mycobacteriaceae</taxon>
        <taxon>Mycolicibacterium</taxon>
    </lineage>
</organism>
<reference key="1">
    <citation type="submission" date="2007-04" db="EMBL/GenBank/DDBJ databases">
        <title>Complete sequence of chromosome of Mycobacterium gilvum PYR-GCK.</title>
        <authorList>
            <consortium name="US DOE Joint Genome Institute"/>
            <person name="Copeland A."/>
            <person name="Lucas S."/>
            <person name="Lapidus A."/>
            <person name="Barry K."/>
            <person name="Detter J.C."/>
            <person name="Glavina del Rio T."/>
            <person name="Hammon N."/>
            <person name="Israni S."/>
            <person name="Dalin E."/>
            <person name="Tice H."/>
            <person name="Pitluck S."/>
            <person name="Chain P."/>
            <person name="Malfatti S."/>
            <person name="Shin M."/>
            <person name="Vergez L."/>
            <person name="Schmutz J."/>
            <person name="Larimer F."/>
            <person name="Land M."/>
            <person name="Hauser L."/>
            <person name="Kyrpides N."/>
            <person name="Mikhailova N."/>
            <person name="Miller C."/>
            <person name="Richardson P."/>
        </authorList>
    </citation>
    <scope>NUCLEOTIDE SEQUENCE [LARGE SCALE GENOMIC DNA]</scope>
    <source>
        <strain>PYR-GCK</strain>
    </source>
</reference>
<name>RS182_MYCGI</name>
<keyword id="KW-0687">Ribonucleoprotein</keyword>
<keyword id="KW-0689">Ribosomal protein</keyword>
<keyword id="KW-0694">RNA-binding</keyword>
<keyword id="KW-0699">rRNA-binding</keyword>
<gene>
    <name evidence="1" type="primary">rpsR2</name>
    <name type="ordered locus">Mflv_1309</name>
</gene>